<comment type="catalytic activity">
    <reaction evidence="1">
        <text>tRNA(Phe) + L-phenylalanine + ATP = L-phenylalanyl-tRNA(Phe) + AMP + diphosphate + H(+)</text>
        <dbReference type="Rhea" id="RHEA:19413"/>
        <dbReference type="Rhea" id="RHEA-COMP:9668"/>
        <dbReference type="Rhea" id="RHEA-COMP:9699"/>
        <dbReference type="ChEBI" id="CHEBI:15378"/>
        <dbReference type="ChEBI" id="CHEBI:30616"/>
        <dbReference type="ChEBI" id="CHEBI:33019"/>
        <dbReference type="ChEBI" id="CHEBI:58095"/>
        <dbReference type="ChEBI" id="CHEBI:78442"/>
        <dbReference type="ChEBI" id="CHEBI:78531"/>
        <dbReference type="ChEBI" id="CHEBI:456215"/>
        <dbReference type="EC" id="6.1.1.20"/>
    </reaction>
</comment>
<comment type="cofactor">
    <cofactor evidence="1">
        <name>Mg(2+)</name>
        <dbReference type="ChEBI" id="CHEBI:18420"/>
    </cofactor>
    <text evidence="1">Binds 2 magnesium ions per tetramer.</text>
</comment>
<comment type="subunit">
    <text evidence="1">Tetramer of two alpha and two beta subunits.</text>
</comment>
<comment type="subcellular location">
    <subcellularLocation>
        <location evidence="1">Cytoplasm</location>
    </subcellularLocation>
</comment>
<comment type="similarity">
    <text evidence="1">Belongs to the class-II aminoacyl-tRNA synthetase family. Phe-tRNA synthetase alpha subunit type 2 subfamily.</text>
</comment>
<sequence>MMPRMTGKADLNTLVHKLHPLEIKVLKNCAMDEILSTSLLISRLGFKEGHANQAFSWLRAKRIIEEHQREQMRSFELTPCGYAAASDGTAEERMLTFLSSPPSLTAIADAAEHLHPRPPLCNGLSLPELAHALTLAPKDVGSAFGILAQEGILRMDGEKRIHIVSPHVSDRMSLTRTLLQRAAARVASPSEASDTPPGTLFESELSDDERRVMERIAKKRGASDSLFKVSVRERVTFTFTPTARAVQEALHTAGLTGNEIGALTVECLKSGAWKTQHLRRYNVHIPPARIIPGRSNAYADFLEHIKDRLVALGFQEFDGPLVETDFWNADALFMPQFHPARDIHDVYYLKHPTHAPTIPEPFLSRVAATHERGADSGSLGWRYSFDRDFTRRLLLRSQGTALSARHLPTAHIPGKYFGIARCFRHDQVDATHLADFYQTEGIVLGTDVNVCTLLGMLKILATEIAGAQEVRYVGGYFPFTEPSIELHALHPALGWFELGGAGLLRPEVTDPLGVHVPVMAWGLGVDRMALLALGISDVRELFSPDIESVRLRV</sequence>
<protein>
    <recommendedName>
        <fullName evidence="1">Phenylalanine--tRNA ligase alpha subunit</fullName>
        <ecNumber evidence="1">6.1.1.20</ecNumber>
    </recommendedName>
    <alternativeName>
        <fullName evidence="1">Phenylalanyl-tRNA synthetase alpha subunit</fullName>
        <shortName evidence="1">PheRS</shortName>
    </alternativeName>
</protein>
<evidence type="ECO:0000255" key="1">
    <source>
        <dbReference type="HAMAP-Rule" id="MF_00282"/>
    </source>
</evidence>
<name>SYFA_TREPS</name>
<keyword id="KW-0030">Aminoacyl-tRNA synthetase</keyword>
<keyword id="KW-0067">ATP-binding</keyword>
<keyword id="KW-0963">Cytoplasm</keyword>
<keyword id="KW-0436">Ligase</keyword>
<keyword id="KW-0460">Magnesium</keyword>
<keyword id="KW-0479">Metal-binding</keyword>
<keyword id="KW-0547">Nucleotide-binding</keyword>
<keyword id="KW-0648">Protein biosynthesis</keyword>
<gene>
    <name evidence="1" type="primary">pheS</name>
    <name type="ordered locus">TPASS_0973</name>
</gene>
<organism>
    <name type="scientific">Treponema pallidum subsp. pallidum (strain SS14)</name>
    <dbReference type="NCBI Taxonomy" id="455434"/>
    <lineage>
        <taxon>Bacteria</taxon>
        <taxon>Pseudomonadati</taxon>
        <taxon>Spirochaetota</taxon>
        <taxon>Spirochaetia</taxon>
        <taxon>Spirochaetales</taxon>
        <taxon>Treponemataceae</taxon>
        <taxon>Treponema</taxon>
    </lineage>
</organism>
<dbReference type="EC" id="6.1.1.20" evidence="1"/>
<dbReference type="EMBL" id="CP000805">
    <property type="protein sequence ID" value="ACD71389.1"/>
    <property type="molecule type" value="Genomic_DNA"/>
</dbReference>
<dbReference type="RefSeq" id="WP_010882417.1">
    <property type="nucleotide sequence ID" value="NC_021508.1"/>
</dbReference>
<dbReference type="SMR" id="B2S4L0"/>
<dbReference type="KEGG" id="tpp:TPASS_0973"/>
<dbReference type="PATRIC" id="fig|455434.6.peg.960"/>
<dbReference type="Proteomes" id="UP000001202">
    <property type="component" value="Chromosome"/>
</dbReference>
<dbReference type="GO" id="GO:0005737">
    <property type="term" value="C:cytoplasm"/>
    <property type="evidence" value="ECO:0007669"/>
    <property type="project" value="UniProtKB-SubCell"/>
</dbReference>
<dbReference type="GO" id="GO:0005524">
    <property type="term" value="F:ATP binding"/>
    <property type="evidence" value="ECO:0007669"/>
    <property type="project" value="UniProtKB-UniRule"/>
</dbReference>
<dbReference type="GO" id="GO:0000287">
    <property type="term" value="F:magnesium ion binding"/>
    <property type="evidence" value="ECO:0007669"/>
    <property type="project" value="UniProtKB-UniRule"/>
</dbReference>
<dbReference type="GO" id="GO:0004826">
    <property type="term" value="F:phenylalanine-tRNA ligase activity"/>
    <property type="evidence" value="ECO:0007669"/>
    <property type="project" value="UniProtKB-UniRule"/>
</dbReference>
<dbReference type="GO" id="GO:0000049">
    <property type="term" value="F:tRNA binding"/>
    <property type="evidence" value="ECO:0007669"/>
    <property type="project" value="InterPro"/>
</dbReference>
<dbReference type="GO" id="GO:0006432">
    <property type="term" value="P:phenylalanyl-tRNA aminoacylation"/>
    <property type="evidence" value="ECO:0007669"/>
    <property type="project" value="UniProtKB-UniRule"/>
</dbReference>
<dbReference type="CDD" id="cd00496">
    <property type="entry name" value="PheRS_alpha_core"/>
    <property type="match status" value="1"/>
</dbReference>
<dbReference type="Gene3D" id="3.30.930.10">
    <property type="entry name" value="Bira Bifunctional Protein, Domain 2"/>
    <property type="match status" value="1"/>
</dbReference>
<dbReference type="HAMAP" id="MF_00282">
    <property type="entry name" value="Phe_tRNA_synth_alpha2"/>
    <property type="match status" value="1"/>
</dbReference>
<dbReference type="InterPro" id="IPR006195">
    <property type="entry name" value="aa-tRNA-synth_II"/>
</dbReference>
<dbReference type="InterPro" id="IPR045864">
    <property type="entry name" value="aa-tRNA-synth_II/BPL/LPL"/>
</dbReference>
<dbReference type="InterPro" id="IPR004529">
    <property type="entry name" value="Phe-tRNA-synth_IIc_asu"/>
</dbReference>
<dbReference type="InterPro" id="IPR022917">
    <property type="entry name" value="Phe_tRNA_ligase_alpha_bac/arc"/>
</dbReference>
<dbReference type="InterPro" id="IPR002319">
    <property type="entry name" value="Phenylalanyl-tRNA_Synthase"/>
</dbReference>
<dbReference type="NCBIfam" id="TIGR00468">
    <property type="entry name" value="pheS"/>
    <property type="match status" value="1"/>
</dbReference>
<dbReference type="NCBIfam" id="NF003210">
    <property type="entry name" value="PRK04172.1"/>
    <property type="match status" value="1"/>
</dbReference>
<dbReference type="PANTHER" id="PTHR11538:SF40">
    <property type="entry name" value="PHENYLALANINE--TRNA LIGASE ALPHA SUBUNIT"/>
    <property type="match status" value="1"/>
</dbReference>
<dbReference type="PANTHER" id="PTHR11538">
    <property type="entry name" value="PHENYLALANYL-TRNA SYNTHETASE"/>
    <property type="match status" value="1"/>
</dbReference>
<dbReference type="Pfam" id="PF01409">
    <property type="entry name" value="tRNA-synt_2d"/>
    <property type="match status" value="1"/>
</dbReference>
<dbReference type="SUPFAM" id="SSF55681">
    <property type="entry name" value="Class II aaRS and biotin synthetases"/>
    <property type="match status" value="1"/>
</dbReference>
<dbReference type="PROSITE" id="PS50862">
    <property type="entry name" value="AA_TRNA_LIGASE_II"/>
    <property type="match status" value="1"/>
</dbReference>
<proteinExistence type="inferred from homology"/>
<accession>B2S4L0</accession>
<reference key="1">
    <citation type="journal article" date="2008" name="BMC Microbiol.">
        <title>Complete genome sequence of Treponema pallidum ssp. pallidum strain SS14 determined with oligonucleotide arrays.</title>
        <authorList>
            <person name="Matejkova P."/>
            <person name="Strouhal M."/>
            <person name="Smajs D."/>
            <person name="Norris S.J."/>
            <person name="Palzkill T."/>
            <person name="Petrosino J.F."/>
            <person name="Sodergren E."/>
            <person name="Norton J.E."/>
            <person name="Singh J."/>
            <person name="Richmond T.A."/>
            <person name="Molla M.N."/>
            <person name="Albert T.J."/>
            <person name="Weinstock G.M."/>
        </authorList>
    </citation>
    <scope>NUCLEOTIDE SEQUENCE [LARGE SCALE GENOMIC DNA]</scope>
    <source>
        <strain>SS14</strain>
    </source>
</reference>
<feature type="chain" id="PRO_1000114937" description="Phenylalanine--tRNA ligase alpha subunit">
    <location>
        <begin position="1"/>
        <end position="553"/>
    </location>
</feature>
<feature type="binding site" evidence="1">
    <location>
        <position position="400"/>
    </location>
    <ligand>
        <name>L-phenylalanine</name>
        <dbReference type="ChEBI" id="CHEBI:58095"/>
    </ligand>
</feature>
<feature type="binding site" evidence="1">
    <location>
        <position position="479"/>
    </location>
    <ligand>
        <name>L-phenylalanine</name>
        <dbReference type="ChEBI" id="CHEBI:58095"/>
    </ligand>
</feature>
<feature type="binding site" evidence="1">
    <location>
        <position position="481"/>
    </location>
    <ligand>
        <name>Mg(2+)</name>
        <dbReference type="ChEBI" id="CHEBI:18420"/>
        <note>shared with beta subunit</note>
    </ligand>
</feature>